<gene>
    <name type="primary">dbp10</name>
    <name type="ORF">ACLA_084780</name>
</gene>
<protein>
    <recommendedName>
        <fullName>ATP-dependent RNA helicase dbp10</fullName>
        <ecNumber>3.6.4.13</ecNumber>
    </recommendedName>
</protein>
<reference key="1">
    <citation type="journal article" date="2008" name="PLoS Genet.">
        <title>Genomic islands in the pathogenic filamentous fungus Aspergillus fumigatus.</title>
        <authorList>
            <person name="Fedorova N.D."/>
            <person name="Khaldi N."/>
            <person name="Joardar V.S."/>
            <person name="Maiti R."/>
            <person name="Amedeo P."/>
            <person name="Anderson M.J."/>
            <person name="Crabtree J."/>
            <person name="Silva J.C."/>
            <person name="Badger J.H."/>
            <person name="Albarraq A."/>
            <person name="Angiuoli S."/>
            <person name="Bussey H."/>
            <person name="Bowyer P."/>
            <person name="Cotty P.J."/>
            <person name="Dyer P.S."/>
            <person name="Egan A."/>
            <person name="Galens K."/>
            <person name="Fraser-Liggett C.M."/>
            <person name="Haas B.J."/>
            <person name="Inman J.M."/>
            <person name="Kent R."/>
            <person name="Lemieux S."/>
            <person name="Malavazi I."/>
            <person name="Orvis J."/>
            <person name="Roemer T."/>
            <person name="Ronning C.M."/>
            <person name="Sundaram J.P."/>
            <person name="Sutton G."/>
            <person name="Turner G."/>
            <person name="Venter J.C."/>
            <person name="White O.R."/>
            <person name="Whitty B.R."/>
            <person name="Youngman P."/>
            <person name="Wolfe K.H."/>
            <person name="Goldman G.H."/>
            <person name="Wortman J.R."/>
            <person name="Jiang B."/>
            <person name="Denning D.W."/>
            <person name="Nierman W.C."/>
        </authorList>
    </citation>
    <scope>NUCLEOTIDE SEQUENCE [LARGE SCALE GENOMIC DNA]</scope>
    <source>
        <strain>ATCC 1007 / CBS 513.65 / DSM 816 / NCTC 3887 / NRRL 1 / QM 1276 / 107</strain>
    </source>
</reference>
<organism>
    <name type="scientific">Aspergillus clavatus (strain ATCC 1007 / CBS 513.65 / DSM 816 / NCTC 3887 / NRRL 1 / QM 1276 / 107)</name>
    <dbReference type="NCBI Taxonomy" id="344612"/>
    <lineage>
        <taxon>Eukaryota</taxon>
        <taxon>Fungi</taxon>
        <taxon>Dikarya</taxon>
        <taxon>Ascomycota</taxon>
        <taxon>Pezizomycotina</taxon>
        <taxon>Eurotiomycetes</taxon>
        <taxon>Eurotiomycetidae</taxon>
        <taxon>Eurotiales</taxon>
        <taxon>Aspergillaceae</taxon>
        <taxon>Aspergillus</taxon>
        <taxon>Aspergillus subgen. Fumigati</taxon>
    </lineage>
</organism>
<sequence length="935" mass="103007">MAPRAASPALSENEFDITGALFQNDSESDNERSSAKSKRQPKKKIPSQDLDFLGDVNDDDGDEAFIAQQQTSANRKASNLKGRTVKKGGGFQAMGLSANLLKAIARKGFSVPTPIQRKTIPVIMDDQDVVGMARTGSGKTAAFVIPMIEKLRSHSTKVGARGLILSPSRELALQTLKVVKELGKGTDLKCVLLVGGDSLEEQFTMMAGNPDIVIATPGRFLHLKVEMNLDLYSIRYVVFDEADRLFEMGFAAQLTEILHGLPPNRQTLLFSATLPKSLVEFARAGLQEPTLIRLDTESKISPDLQNAFFSIKSSEKEGALLYILHEVIKMPTGPTEMAQQRQGEDASARFSKANKRKRAEMEKAVNTKESPTQHSTIVFAATKHHVDYLYSLLHEAGFAVSYVYGALDQTARKIQVQNFRSGLSNILVVTDVAARGIDIPILANVINYDFPSQPKIFIHRVGRTARAGRKGWSYSLVRDADAPYLLDLQLFLGRRLVVGRENGDHVNFAEDVVAGGLPRDGLSQNCEWVTKVLGDDADIAAQRTVATKGEKLYMRTRNSASLESAKRAKQVVSSDHWTSIHPLFQDESSNLEAEREKMLARIGGYRPSETIFEVNTRRIGKQESEEALNTIKRVRTTLETKKKRSKANAKSEFLEDAPEGLKTGEGEAGKNEDEAAFSDADDIDAPTGVADDMSLASDSELEVTFSSYSQSNGNKSKKASAASFQNPDYFMSYTPNNNSLAEDRAYGVHSGTNSNFAQASRSATMDLAGDEGSRGFGEPRTMMRWDKRHKKYVARQNDEDGSKGTRLVRGESGAKIASSFRSGRFDAWKRGNRVGRMPRVGEAEAPNLAAGLNAALSGKRFKHRREQAPKRADPLRGDYEKMKKKADKAKERSMSKAGGAAAGGKSELRNTDDIRIARKLKQRRQEKNARPSRKR</sequence>
<keyword id="KW-0067">ATP-binding</keyword>
<keyword id="KW-0347">Helicase</keyword>
<keyword id="KW-0378">Hydrolase</keyword>
<keyword id="KW-0547">Nucleotide-binding</keyword>
<keyword id="KW-0539">Nucleus</keyword>
<keyword id="KW-1185">Reference proteome</keyword>
<keyword id="KW-0690">Ribosome biogenesis</keyword>
<keyword id="KW-0694">RNA-binding</keyword>
<keyword id="KW-0698">rRNA processing</keyword>
<dbReference type="EC" id="3.6.4.13"/>
<dbReference type="EMBL" id="DS027060">
    <property type="protein sequence ID" value="EAW06783.1"/>
    <property type="molecule type" value="Genomic_DNA"/>
</dbReference>
<dbReference type="RefSeq" id="XP_001268209.1">
    <property type="nucleotide sequence ID" value="XM_001268208.1"/>
</dbReference>
<dbReference type="SMR" id="A1CTZ6"/>
<dbReference type="STRING" id="344612.A1CTZ6"/>
<dbReference type="EnsemblFungi" id="EAW06783">
    <property type="protein sequence ID" value="EAW06783"/>
    <property type="gene ID" value="ACLA_084780"/>
</dbReference>
<dbReference type="GeneID" id="4700481"/>
<dbReference type="KEGG" id="act:ACLA_084780"/>
<dbReference type="VEuPathDB" id="FungiDB:ACLA_084780"/>
<dbReference type="eggNOG" id="KOG0337">
    <property type="taxonomic scope" value="Eukaryota"/>
</dbReference>
<dbReference type="HOGENOM" id="CLU_003041_5_1_1"/>
<dbReference type="OMA" id="EDQFGMM"/>
<dbReference type="OrthoDB" id="10261375at2759"/>
<dbReference type="Proteomes" id="UP000006701">
    <property type="component" value="Unassembled WGS sequence"/>
</dbReference>
<dbReference type="GO" id="GO:0005829">
    <property type="term" value="C:cytosol"/>
    <property type="evidence" value="ECO:0007669"/>
    <property type="project" value="TreeGrafter"/>
</dbReference>
<dbReference type="GO" id="GO:0005730">
    <property type="term" value="C:nucleolus"/>
    <property type="evidence" value="ECO:0007669"/>
    <property type="project" value="UniProtKB-SubCell"/>
</dbReference>
<dbReference type="GO" id="GO:0005524">
    <property type="term" value="F:ATP binding"/>
    <property type="evidence" value="ECO:0007669"/>
    <property type="project" value="UniProtKB-KW"/>
</dbReference>
<dbReference type="GO" id="GO:0016887">
    <property type="term" value="F:ATP hydrolysis activity"/>
    <property type="evidence" value="ECO:0007669"/>
    <property type="project" value="RHEA"/>
</dbReference>
<dbReference type="GO" id="GO:0003723">
    <property type="term" value="F:RNA binding"/>
    <property type="evidence" value="ECO:0007669"/>
    <property type="project" value="UniProtKB-KW"/>
</dbReference>
<dbReference type="GO" id="GO:0003724">
    <property type="term" value="F:RNA helicase activity"/>
    <property type="evidence" value="ECO:0007669"/>
    <property type="project" value="UniProtKB-EC"/>
</dbReference>
<dbReference type="GO" id="GO:0006364">
    <property type="term" value="P:rRNA processing"/>
    <property type="evidence" value="ECO:0007669"/>
    <property type="project" value="UniProtKB-KW"/>
</dbReference>
<dbReference type="CDD" id="cd17959">
    <property type="entry name" value="DEADc_DDX54"/>
    <property type="match status" value="1"/>
</dbReference>
<dbReference type="CDD" id="cd18787">
    <property type="entry name" value="SF2_C_DEAD"/>
    <property type="match status" value="1"/>
</dbReference>
<dbReference type="FunFam" id="3.40.50.300:FF:000865">
    <property type="entry name" value="ATP-dependent RNA helicase DDX54"/>
    <property type="match status" value="1"/>
</dbReference>
<dbReference type="Gene3D" id="3.40.50.300">
    <property type="entry name" value="P-loop containing nucleotide triphosphate hydrolases"/>
    <property type="match status" value="2"/>
</dbReference>
<dbReference type="InterPro" id="IPR012541">
    <property type="entry name" value="DBP10_C"/>
</dbReference>
<dbReference type="InterPro" id="IPR033517">
    <property type="entry name" value="DDX54/DBP10_DEAD-box_helicase"/>
</dbReference>
<dbReference type="InterPro" id="IPR011545">
    <property type="entry name" value="DEAD/DEAH_box_helicase_dom"/>
</dbReference>
<dbReference type="InterPro" id="IPR050079">
    <property type="entry name" value="DEAD_box_RNA_helicase"/>
</dbReference>
<dbReference type="InterPro" id="IPR014001">
    <property type="entry name" value="Helicase_ATP-bd"/>
</dbReference>
<dbReference type="InterPro" id="IPR001650">
    <property type="entry name" value="Helicase_C-like"/>
</dbReference>
<dbReference type="InterPro" id="IPR027417">
    <property type="entry name" value="P-loop_NTPase"/>
</dbReference>
<dbReference type="InterPro" id="IPR000629">
    <property type="entry name" value="RNA-helicase_DEAD-box_CS"/>
</dbReference>
<dbReference type="InterPro" id="IPR014014">
    <property type="entry name" value="RNA_helicase_DEAD_Q_motif"/>
</dbReference>
<dbReference type="PANTHER" id="PTHR47959">
    <property type="entry name" value="ATP-DEPENDENT RNA HELICASE RHLE-RELATED"/>
    <property type="match status" value="1"/>
</dbReference>
<dbReference type="PANTHER" id="PTHR47959:SF8">
    <property type="entry name" value="RNA HELICASE"/>
    <property type="match status" value="1"/>
</dbReference>
<dbReference type="Pfam" id="PF08147">
    <property type="entry name" value="DBP10CT"/>
    <property type="match status" value="1"/>
</dbReference>
<dbReference type="Pfam" id="PF00270">
    <property type="entry name" value="DEAD"/>
    <property type="match status" value="1"/>
</dbReference>
<dbReference type="Pfam" id="PF00271">
    <property type="entry name" value="Helicase_C"/>
    <property type="match status" value="1"/>
</dbReference>
<dbReference type="SMART" id="SM01123">
    <property type="entry name" value="DBP10CT"/>
    <property type="match status" value="1"/>
</dbReference>
<dbReference type="SMART" id="SM00487">
    <property type="entry name" value="DEXDc"/>
    <property type="match status" value="1"/>
</dbReference>
<dbReference type="SMART" id="SM00490">
    <property type="entry name" value="HELICc"/>
    <property type="match status" value="1"/>
</dbReference>
<dbReference type="SUPFAM" id="SSF52540">
    <property type="entry name" value="P-loop containing nucleoside triphosphate hydrolases"/>
    <property type="match status" value="2"/>
</dbReference>
<dbReference type="PROSITE" id="PS00039">
    <property type="entry name" value="DEAD_ATP_HELICASE"/>
    <property type="match status" value="1"/>
</dbReference>
<dbReference type="PROSITE" id="PS51192">
    <property type="entry name" value="HELICASE_ATP_BIND_1"/>
    <property type="match status" value="1"/>
</dbReference>
<dbReference type="PROSITE" id="PS51194">
    <property type="entry name" value="HELICASE_CTER"/>
    <property type="match status" value="1"/>
</dbReference>
<dbReference type="PROSITE" id="PS51195">
    <property type="entry name" value="Q_MOTIF"/>
    <property type="match status" value="1"/>
</dbReference>
<proteinExistence type="inferred from homology"/>
<feature type="chain" id="PRO_0000281713" description="ATP-dependent RNA helicase dbp10">
    <location>
        <begin position="1"/>
        <end position="935"/>
    </location>
</feature>
<feature type="domain" description="Helicase ATP-binding" evidence="2">
    <location>
        <begin position="120"/>
        <end position="292"/>
    </location>
</feature>
<feature type="domain" description="Helicase C-terminal" evidence="3">
    <location>
        <begin position="360"/>
        <end position="514"/>
    </location>
</feature>
<feature type="region of interest" description="Disordered" evidence="4">
    <location>
        <begin position="1"/>
        <end position="51"/>
    </location>
</feature>
<feature type="region of interest" description="Disordered" evidence="4">
    <location>
        <begin position="638"/>
        <end position="674"/>
    </location>
</feature>
<feature type="region of interest" description="Disordered" evidence="4">
    <location>
        <begin position="857"/>
        <end position="935"/>
    </location>
</feature>
<feature type="short sequence motif" description="Q motif">
    <location>
        <begin position="89"/>
        <end position="117"/>
    </location>
</feature>
<feature type="short sequence motif" description="DEAD box">
    <location>
        <begin position="240"/>
        <end position="243"/>
    </location>
</feature>
<feature type="compositionally biased region" description="Basic residues" evidence="4">
    <location>
        <begin position="35"/>
        <end position="45"/>
    </location>
</feature>
<feature type="compositionally biased region" description="Basic and acidic residues" evidence="4">
    <location>
        <begin position="662"/>
        <end position="673"/>
    </location>
</feature>
<feature type="compositionally biased region" description="Basic and acidic residues" evidence="4">
    <location>
        <begin position="866"/>
        <end position="881"/>
    </location>
</feature>
<feature type="compositionally biased region" description="Basic and acidic residues" evidence="4">
    <location>
        <begin position="906"/>
        <end position="916"/>
    </location>
</feature>
<feature type="binding site" evidence="2">
    <location>
        <begin position="133"/>
        <end position="140"/>
    </location>
    <ligand>
        <name>ATP</name>
        <dbReference type="ChEBI" id="CHEBI:30616"/>
    </ligand>
</feature>
<comment type="function">
    <text evidence="1">ATP-binding RNA helicase involved in the biogenesis of 60S ribosomal subunits and is required for the normal formation of 25S and 5.8S rRNAs.</text>
</comment>
<comment type="catalytic activity">
    <reaction>
        <text>ATP + H2O = ADP + phosphate + H(+)</text>
        <dbReference type="Rhea" id="RHEA:13065"/>
        <dbReference type="ChEBI" id="CHEBI:15377"/>
        <dbReference type="ChEBI" id="CHEBI:15378"/>
        <dbReference type="ChEBI" id="CHEBI:30616"/>
        <dbReference type="ChEBI" id="CHEBI:43474"/>
        <dbReference type="ChEBI" id="CHEBI:456216"/>
        <dbReference type="EC" id="3.6.4.13"/>
    </reaction>
</comment>
<comment type="subcellular location">
    <subcellularLocation>
        <location evidence="1">Nucleus</location>
        <location evidence="1">Nucleolus</location>
    </subcellularLocation>
</comment>
<comment type="domain">
    <text>The Q motif is unique to and characteristic of the DEAD box family of RNA helicases and controls ATP binding and hydrolysis.</text>
</comment>
<comment type="similarity">
    <text evidence="5">Belongs to the DEAD box helicase family. DDX54/DBP10 subfamily.</text>
</comment>
<accession>A1CTZ6</accession>
<evidence type="ECO:0000250" key="1"/>
<evidence type="ECO:0000255" key="2">
    <source>
        <dbReference type="PROSITE-ProRule" id="PRU00541"/>
    </source>
</evidence>
<evidence type="ECO:0000255" key="3">
    <source>
        <dbReference type="PROSITE-ProRule" id="PRU00542"/>
    </source>
</evidence>
<evidence type="ECO:0000256" key="4">
    <source>
        <dbReference type="SAM" id="MobiDB-lite"/>
    </source>
</evidence>
<evidence type="ECO:0000305" key="5"/>
<name>DBP10_ASPCL</name>